<reference key="1">
    <citation type="journal article" date="2004" name="Curr. Genet.">
        <title>Structural features and transcript-editing analysis of sugarcane (Saccharum officinarum L.) chloroplast genome.</title>
        <authorList>
            <person name="Calsa T. Jr."/>
            <person name="Carraro D.M."/>
            <person name="Benatti M.R."/>
            <person name="Barbosa A.C."/>
            <person name="Kitajima J.P."/>
            <person name="Carrer H."/>
        </authorList>
    </citation>
    <scope>NUCLEOTIDE SEQUENCE [LARGE SCALE GENOMIC DNA]</scope>
    <source>
        <strain>cv. SP-80-3280</strain>
    </source>
</reference>
<sequence length="62" mass="6554">MTIAFQLAVFALIATSSVLVISVPLVFASPDGWSNNKNVVFSGTSLWIGLVFLVAILNSLIS</sequence>
<keyword id="KW-0150">Chloroplast</keyword>
<keyword id="KW-0472">Membrane</keyword>
<keyword id="KW-0602">Photosynthesis</keyword>
<keyword id="KW-0604">Photosystem II</keyword>
<keyword id="KW-0934">Plastid</keyword>
<keyword id="KW-0674">Reaction center</keyword>
<keyword id="KW-0793">Thylakoid</keyword>
<keyword id="KW-0812">Transmembrane</keyword>
<keyword id="KW-1133">Transmembrane helix</keyword>
<accession>Q6L3B0</accession>
<geneLocation type="chloroplast"/>
<gene>
    <name evidence="1" type="primary">psbZ</name>
    <name type="ordered locus">PS093</name>
</gene>
<evidence type="ECO:0000255" key="1">
    <source>
        <dbReference type="HAMAP-Rule" id="MF_00644"/>
    </source>
</evidence>
<organism>
    <name type="scientific">Saccharum hybrid</name>
    <name type="common">Sugarcane</name>
    <dbReference type="NCBI Taxonomy" id="15819"/>
    <lineage>
        <taxon>Eukaryota</taxon>
        <taxon>Viridiplantae</taxon>
        <taxon>Streptophyta</taxon>
        <taxon>Embryophyta</taxon>
        <taxon>Tracheophyta</taxon>
        <taxon>Spermatophyta</taxon>
        <taxon>Magnoliopsida</taxon>
        <taxon>Liliopsida</taxon>
        <taxon>Poales</taxon>
        <taxon>Poaceae</taxon>
        <taxon>PACMAD clade</taxon>
        <taxon>Panicoideae</taxon>
        <taxon>Andropogonodae</taxon>
        <taxon>Andropogoneae</taxon>
        <taxon>Saccharinae</taxon>
        <taxon>Saccharum</taxon>
    </lineage>
</organism>
<comment type="function">
    <text evidence="1">May control the interaction of photosystem II (PSII) cores with the light-harvesting antenna, regulates electron flow through the 2 photosystem reaction centers. PSII is a light-driven water plastoquinone oxidoreductase, using light energy to abstract electrons from H(2)O, generating a proton gradient subsequently used for ATP formation.</text>
</comment>
<comment type="subunit">
    <text evidence="1">PSII is composed of 1 copy each of membrane proteins PsbA, PsbB, PsbC, PsbD, PsbE, PsbF, PsbH, PsbI, PsbJ, PsbK, PsbL, PsbM, PsbT, PsbY, PsbZ, Psb30/Ycf12, at least 3 peripheral proteins of the oxygen-evolving complex and a large number of cofactors. It forms dimeric complexes.</text>
</comment>
<comment type="subcellular location">
    <subcellularLocation>
        <location evidence="1">Plastid</location>
        <location evidence="1">Chloroplast thylakoid membrane</location>
        <topology evidence="1">Multi-pass membrane protein</topology>
    </subcellularLocation>
</comment>
<comment type="similarity">
    <text evidence="1">Belongs to the PsbZ family.</text>
</comment>
<proteinExistence type="inferred from homology"/>
<name>PSBZ_SACHY</name>
<feature type="chain" id="PRO_0000217726" description="Photosystem II reaction center protein Z">
    <location>
        <begin position="1"/>
        <end position="62"/>
    </location>
</feature>
<feature type="transmembrane region" description="Helical" evidence="1">
    <location>
        <begin position="8"/>
        <end position="28"/>
    </location>
</feature>
<feature type="transmembrane region" description="Helical" evidence="1">
    <location>
        <begin position="41"/>
        <end position="61"/>
    </location>
</feature>
<protein>
    <recommendedName>
        <fullName evidence="1">Photosystem II reaction center protein Z</fullName>
        <shortName evidence="1">PSII-Z</shortName>
    </recommendedName>
</protein>
<dbReference type="EMBL" id="AE009947">
    <property type="protein sequence ID" value="AAT44682.1"/>
    <property type="molecule type" value="Genomic_DNA"/>
</dbReference>
<dbReference type="SMR" id="Q6L3B0"/>
<dbReference type="GO" id="GO:0009535">
    <property type="term" value="C:chloroplast thylakoid membrane"/>
    <property type="evidence" value="ECO:0007669"/>
    <property type="project" value="UniProtKB-SubCell"/>
</dbReference>
<dbReference type="GO" id="GO:0009539">
    <property type="term" value="C:photosystem II reaction center"/>
    <property type="evidence" value="ECO:0007669"/>
    <property type="project" value="InterPro"/>
</dbReference>
<dbReference type="GO" id="GO:0015979">
    <property type="term" value="P:photosynthesis"/>
    <property type="evidence" value="ECO:0007669"/>
    <property type="project" value="UniProtKB-UniRule"/>
</dbReference>
<dbReference type="GO" id="GO:0042549">
    <property type="term" value="P:photosystem II stabilization"/>
    <property type="evidence" value="ECO:0007669"/>
    <property type="project" value="InterPro"/>
</dbReference>
<dbReference type="FunFam" id="1.10.287.740:FF:000001">
    <property type="entry name" value="Photosystem II reaction center protein Z"/>
    <property type="match status" value="1"/>
</dbReference>
<dbReference type="Gene3D" id="1.10.287.740">
    <property type="entry name" value="Photosystem II PsbZ, reaction centre"/>
    <property type="match status" value="1"/>
</dbReference>
<dbReference type="HAMAP" id="MF_00644">
    <property type="entry name" value="PSII_PsbZ"/>
    <property type="match status" value="1"/>
</dbReference>
<dbReference type="InterPro" id="IPR002644">
    <property type="entry name" value="PSII_PsbZ"/>
</dbReference>
<dbReference type="InterPro" id="IPR036512">
    <property type="entry name" value="PSII_PsbZ_sf"/>
</dbReference>
<dbReference type="NCBIfam" id="TIGR03043">
    <property type="entry name" value="PS_II_psbZ"/>
    <property type="match status" value="1"/>
</dbReference>
<dbReference type="PANTHER" id="PTHR34971">
    <property type="entry name" value="PHOTOSYSTEM II REACTION CENTER PROTEIN Z"/>
    <property type="match status" value="1"/>
</dbReference>
<dbReference type="PANTHER" id="PTHR34971:SF2">
    <property type="entry name" value="PHOTOSYSTEM II REACTION CENTER PROTEIN Z"/>
    <property type="match status" value="1"/>
</dbReference>
<dbReference type="Pfam" id="PF01737">
    <property type="entry name" value="Ycf9"/>
    <property type="match status" value="1"/>
</dbReference>
<dbReference type="SUPFAM" id="SSF161055">
    <property type="entry name" value="PsbZ-like"/>
    <property type="match status" value="1"/>
</dbReference>